<protein>
    <recommendedName>
        <fullName evidence="8">T cell receptor beta variable 6-6</fullName>
    </recommendedName>
</protein>
<accession>A0A0A6YYG2</accession>
<reference key="1">
    <citation type="journal article" date="2003" name="Nature">
        <title>The DNA sequence of human chromosome 7.</title>
        <authorList>
            <person name="Hillier L.W."/>
            <person name="Fulton R.S."/>
            <person name="Fulton L.A."/>
            <person name="Graves T.A."/>
            <person name="Pepin K.H."/>
            <person name="Wagner-McPherson C."/>
            <person name="Layman D."/>
            <person name="Maas J."/>
            <person name="Jaeger S."/>
            <person name="Walker R."/>
            <person name="Wylie K."/>
            <person name="Sekhon M."/>
            <person name="Becker M.C."/>
            <person name="O'Laughlin M.D."/>
            <person name="Schaller M.E."/>
            <person name="Fewell G.A."/>
            <person name="Delehaunty K.D."/>
            <person name="Miner T.L."/>
            <person name="Nash W.E."/>
            <person name="Cordes M."/>
            <person name="Du H."/>
            <person name="Sun H."/>
            <person name="Edwards J."/>
            <person name="Bradshaw-Cordum H."/>
            <person name="Ali J."/>
            <person name="Andrews S."/>
            <person name="Isak A."/>
            <person name="Vanbrunt A."/>
            <person name="Nguyen C."/>
            <person name="Du F."/>
            <person name="Lamar B."/>
            <person name="Courtney L."/>
            <person name="Kalicki J."/>
            <person name="Ozersky P."/>
            <person name="Bielicki L."/>
            <person name="Scott K."/>
            <person name="Holmes A."/>
            <person name="Harkins R."/>
            <person name="Harris A."/>
            <person name="Strong C.M."/>
            <person name="Hou S."/>
            <person name="Tomlinson C."/>
            <person name="Dauphin-Kohlberg S."/>
            <person name="Kozlowicz-Reilly A."/>
            <person name="Leonard S."/>
            <person name="Rohlfing T."/>
            <person name="Rock S.M."/>
            <person name="Tin-Wollam A.-M."/>
            <person name="Abbott A."/>
            <person name="Minx P."/>
            <person name="Maupin R."/>
            <person name="Strowmatt C."/>
            <person name="Latreille P."/>
            <person name="Miller N."/>
            <person name="Johnson D."/>
            <person name="Murray J."/>
            <person name="Woessner J.P."/>
            <person name="Wendl M.C."/>
            <person name="Yang S.-P."/>
            <person name="Schultz B.R."/>
            <person name="Wallis J.W."/>
            <person name="Spieth J."/>
            <person name="Bieri T.A."/>
            <person name="Nelson J.O."/>
            <person name="Berkowicz N."/>
            <person name="Wohldmann P.E."/>
            <person name="Cook L.L."/>
            <person name="Hickenbotham M.T."/>
            <person name="Eldred J."/>
            <person name="Williams D."/>
            <person name="Bedell J.A."/>
            <person name="Mardis E.R."/>
            <person name="Clifton S.W."/>
            <person name="Chissoe S.L."/>
            <person name="Marra M.A."/>
            <person name="Raymond C."/>
            <person name="Haugen E."/>
            <person name="Gillett W."/>
            <person name="Zhou Y."/>
            <person name="James R."/>
            <person name="Phelps K."/>
            <person name="Iadanoto S."/>
            <person name="Bubb K."/>
            <person name="Simms E."/>
            <person name="Levy R."/>
            <person name="Clendenning J."/>
            <person name="Kaul R."/>
            <person name="Kent W.J."/>
            <person name="Furey T.S."/>
            <person name="Baertsch R.A."/>
            <person name="Brent M.R."/>
            <person name="Keibler E."/>
            <person name="Flicek P."/>
            <person name="Bork P."/>
            <person name="Suyama M."/>
            <person name="Bailey J.A."/>
            <person name="Portnoy M.E."/>
            <person name="Torrents D."/>
            <person name="Chinwalla A.T."/>
            <person name="Gish W.R."/>
            <person name="Eddy S.R."/>
            <person name="McPherson J.D."/>
            <person name="Olson M.V."/>
            <person name="Eichler E.E."/>
            <person name="Green E.D."/>
            <person name="Waterston R.H."/>
            <person name="Wilson R.K."/>
        </authorList>
    </citation>
    <scope>NUCLEOTIDE SEQUENCE [LARGE SCALE GENOMIC DNA] (IMGT ALLELE TRBV6-6*02)</scope>
</reference>
<reference key="2">
    <citation type="book" date="2001" name="The T Cell Receptor FactsBook.">
        <title>The T Cell Receptor FactsBook.</title>
        <editorList>
            <person name="Lefranc M.P."/>
            <person name="Lefranc G."/>
        </editorList>
        <authorList>
            <person name="Lefranc M.P."/>
            <person name="Lefranc G."/>
        </authorList>
    </citation>
    <scope>NOMENCLATURE</scope>
</reference>
<reference key="3">
    <citation type="journal article" date="2004" name="Nat. Rev. Immunol.">
        <title>The many important facets of T-cell repertoire diversity.</title>
        <authorList>
            <person name="Nikolich-Zugich J."/>
            <person name="Slifka M.K."/>
            <person name="Messaoudi I."/>
        </authorList>
    </citation>
    <scope>REVIEW ON T CELL REPERTOIRE DIVERSITY</scope>
</reference>
<reference key="4">
    <citation type="journal article" date="2010" name="Cold Spring Harb. Perspect. Biol.">
        <title>Structural biology of the T-cell receptor: insights into receptor assembly, ligand recognition, and initiation of signaling.</title>
        <authorList>
            <person name="Wucherpfennig K.W."/>
            <person name="Gagnon E."/>
            <person name="Call M.J."/>
            <person name="Huseby E.S."/>
            <person name="Call M.E."/>
        </authorList>
    </citation>
    <scope>REVIEW ON T CELL RECEPTOR-CD3 COMPLEX ASSEMBLY</scope>
    <scope>SUBCELLULAR LOCATION</scope>
</reference>
<reference key="5">
    <citation type="journal article" date="2013" name="Nat. Rev. Immunol.">
        <title>T cell receptor signalling networks: branched, diversified and bounded.</title>
        <authorList>
            <person name="Brownlie R.J."/>
            <person name="Zamoyska R."/>
        </authorList>
    </citation>
    <scope>REVIEW ON T CELL RECEPTOR SIGNALING</scope>
</reference>
<reference key="6">
    <citation type="journal article" date="2014" name="Front. Immunol.">
        <title>Immunoglobulin and T Cell Receptor Genes: IMGT((R)) and the Birth and Rise of Immunoinformatics.</title>
        <authorList>
            <person name="Lefranc M.P."/>
        </authorList>
    </citation>
    <scope>NOMENCLATURE</scope>
</reference>
<reference key="7">
    <citation type="journal article" date="2015" name="Annu. Rev. Immunol.">
        <title>T cell antigen receptor recognition of antigen-presenting molecules.</title>
        <authorList>
            <person name="Rossjohn J."/>
            <person name="Gras S."/>
            <person name="Miles J.J."/>
            <person name="Turner S.J."/>
            <person name="Godfrey D.I."/>
            <person name="McCluskey J."/>
        </authorList>
    </citation>
    <scope>REVIEW ON FUNCTION</scope>
</reference>
<name>TVB66_HUMAN</name>
<feature type="signal peptide" evidence="1">
    <location>
        <begin position="1"/>
        <end position="21"/>
    </location>
</feature>
<feature type="chain" id="PRO_5008203097" description="T cell receptor beta variable 6-6" evidence="1">
    <location>
        <begin position="22"/>
        <end position="114"/>
    </location>
</feature>
<feature type="domain" description="Ig-like" evidence="2">
    <location>
        <begin position="22"/>
        <end position="114" status="greater than"/>
    </location>
</feature>
<feature type="glycosylation site" description="N-linked (GlcNAc...) asparagine" evidence="1">
    <location>
        <position position="84"/>
    </location>
</feature>
<feature type="disulfide bond" evidence="2">
    <location>
        <begin position="42"/>
        <end position="110"/>
    </location>
</feature>
<feature type="non-terminal residue">
    <location>
        <position position="114"/>
    </location>
</feature>
<sequence>MSISLLCCAAFPLLWAGPVNAGVTQTPKFRILKIGQSMTLQCAQDMNHNYMYWYRQDPGMGLKLIYYSVGAGITDKGEVPNGYNVSRSTTEDFPLRLELAAPSQTSVYFCASSY</sequence>
<evidence type="ECO:0000255" key="1"/>
<evidence type="ECO:0000255" key="2">
    <source>
        <dbReference type="PROSITE-ProRule" id="PRU00114"/>
    </source>
</evidence>
<evidence type="ECO:0000303" key="3">
    <source>
    </source>
</evidence>
<evidence type="ECO:0000303" key="4">
    <source>
    </source>
</evidence>
<evidence type="ECO:0000303" key="5">
    <source>
    </source>
</evidence>
<evidence type="ECO:0000303" key="6">
    <source>
    </source>
</evidence>
<evidence type="ECO:0000303" key="7">
    <source>
    </source>
</evidence>
<evidence type="ECO:0000303" key="8">
    <source ref="2"/>
</evidence>
<evidence type="ECO:0000305" key="9"/>
<gene>
    <name evidence="8" type="primary">TRBV6-6</name>
</gene>
<dbReference type="EMBL" id="AC244196">
    <property type="status" value="NOT_ANNOTATED_CDS"/>
    <property type="molecule type" value="Genomic_DNA"/>
</dbReference>
<dbReference type="SMR" id="A0A0A6YYG2"/>
<dbReference type="FunCoup" id="A0A0A6YYG2">
    <property type="interactions" value="429"/>
</dbReference>
<dbReference type="IMGT_GENE-DB" id="TRBV6-6"/>
<dbReference type="GlyCosmos" id="A0A0A6YYG2">
    <property type="glycosylation" value="1 site, No reported glycans"/>
</dbReference>
<dbReference type="GlyGen" id="A0A0A6YYG2">
    <property type="glycosylation" value="1 site"/>
</dbReference>
<dbReference type="BioMuta" id="TRBV6-6"/>
<dbReference type="Ensembl" id="ENST00000390371.3">
    <property type="protein sequence ID" value="ENSP00000374894.3"/>
    <property type="gene ID" value="ENSG00000211724.3"/>
</dbReference>
<dbReference type="AGR" id="HGNC:12231"/>
<dbReference type="GeneCards" id="TRBV6-6"/>
<dbReference type="HGNC" id="HGNC:12231">
    <property type="gene designation" value="TRBV6-6"/>
</dbReference>
<dbReference type="HPA" id="ENSG00000211724">
    <property type="expression patterns" value="Tissue enriched (lymphoid)"/>
</dbReference>
<dbReference type="neXtProt" id="NX_A0A0A6YYG2"/>
<dbReference type="OpenTargets" id="ENSG00000211724"/>
<dbReference type="VEuPathDB" id="HostDB:ENSG00000211724"/>
<dbReference type="GeneTree" id="ENSGT00940000154542"/>
<dbReference type="HOGENOM" id="CLU_077975_9_2_1"/>
<dbReference type="InParanoid" id="A0A0A6YYG2"/>
<dbReference type="OMA" id="DTKNFAL"/>
<dbReference type="OrthoDB" id="9049585at2759"/>
<dbReference type="PAN-GO" id="A0A0A6YYG2">
    <property type="GO annotations" value="2 GO annotations based on evolutionary models"/>
</dbReference>
<dbReference type="SignaLink" id="A0A0A6YYG2"/>
<dbReference type="ChiTaRS" id="TRBV6-6">
    <property type="organism name" value="human"/>
</dbReference>
<dbReference type="Pharos" id="A0A0A6YYG2">
    <property type="development level" value="Tdark"/>
</dbReference>
<dbReference type="PRO" id="PR:A0A0A6YYG2"/>
<dbReference type="Proteomes" id="UP000005640">
    <property type="component" value="Chromosome 7"/>
</dbReference>
<dbReference type="RNAct" id="A0A0A6YYG2">
    <property type="molecule type" value="protein"/>
</dbReference>
<dbReference type="Bgee" id="ENSG00000211724">
    <property type="expression patterns" value="Expressed in lymph node and 68 other cell types or tissues"/>
</dbReference>
<dbReference type="GO" id="GO:0005886">
    <property type="term" value="C:plasma membrane"/>
    <property type="evidence" value="ECO:0000318"/>
    <property type="project" value="GO_Central"/>
</dbReference>
<dbReference type="GO" id="GO:0042101">
    <property type="term" value="C:T cell receptor complex"/>
    <property type="evidence" value="ECO:0007669"/>
    <property type="project" value="UniProtKB-KW"/>
</dbReference>
<dbReference type="GO" id="GO:0002250">
    <property type="term" value="P:adaptive immune response"/>
    <property type="evidence" value="ECO:0007669"/>
    <property type="project" value="UniProtKB-KW"/>
</dbReference>
<dbReference type="GO" id="GO:0007166">
    <property type="term" value="P:cell surface receptor signaling pathway"/>
    <property type="evidence" value="ECO:0000318"/>
    <property type="project" value="GO_Central"/>
</dbReference>
<dbReference type="Gene3D" id="2.60.40.10">
    <property type="entry name" value="Immunoglobulins"/>
    <property type="match status" value="1"/>
</dbReference>
<dbReference type="InterPro" id="IPR007110">
    <property type="entry name" value="Ig-like_dom"/>
</dbReference>
<dbReference type="InterPro" id="IPR036179">
    <property type="entry name" value="Ig-like_dom_sf"/>
</dbReference>
<dbReference type="InterPro" id="IPR013783">
    <property type="entry name" value="Ig-like_fold"/>
</dbReference>
<dbReference type="InterPro" id="IPR013106">
    <property type="entry name" value="Ig_V-set"/>
</dbReference>
<dbReference type="InterPro" id="IPR050413">
    <property type="entry name" value="TCR_beta_variable"/>
</dbReference>
<dbReference type="PANTHER" id="PTHR23268:SF19">
    <property type="entry name" value="T CELL RECEPTOR BETA VARIABLE 6-2-RELATED"/>
    <property type="match status" value="1"/>
</dbReference>
<dbReference type="PANTHER" id="PTHR23268">
    <property type="entry name" value="T-CELL RECEPTOR BETA CHAIN"/>
    <property type="match status" value="1"/>
</dbReference>
<dbReference type="Pfam" id="PF07686">
    <property type="entry name" value="V-set"/>
    <property type="match status" value="1"/>
</dbReference>
<dbReference type="SMART" id="SM00406">
    <property type="entry name" value="IGv"/>
    <property type="match status" value="1"/>
</dbReference>
<dbReference type="SUPFAM" id="SSF48726">
    <property type="entry name" value="Immunoglobulin"/>
    <property type="match status" value="1"/>
</dbReference>
<dbReference type="PROSITE" id="PS50835">
    <property type="entry name" value="IG_LIKE"/>
    <property type="match status" value="1"/>
</dbReference>
<organism>
    <name type="scientific">Homo sapiens</name>
    <name type="common">Human</name>
    <dbReference type="NCBI Taxonomy" id="9606"/>
    <lineage>
        <taxon>Eukaryota</taxon>
        <taxon>Metazoa</taxon>
        <taxon>Chordata</taxon>
        <taxon>Craniata</taxon>
        <taxon>Vertebrata</taxon>
        <taxon>Euteleostomi</taxon>
        <taxon>Mammalia</taxon>
        <taxon>Eutheria</taxon>
        <taxon>Euarchontoglires</taxon>
        <taxon>Primates</taxon>
        <taxon>Haplorrhini</taxon>
        <taxon>Catarrhini</taxon>
        <taxon>Hominidae</taxon>
        <taxon>Homo</taxon>
    </lineage>
</organism>
<proteinExistence type="inferred from homology"/>
<comment type="function">
    <text evidence="3 5 6 7">V region of the variable domain of T cell receptor (TR) beta chain that participates in the antigen recognition (PubMed:24600447). Alpha-beta T cell receptors are antigen specific receptors which are essential to the immune response and are present on the cell surface of T lymphocytes. Recognize peptide-major histocompatibility (MH) (pMH) complexes that are displayed by antigen presenting cells (APC), a prerequisite for efficient T cell adaptive immunity against pathogens (PubMed:25493333). Binding of alpha-beta TR to pMH complex initiates TR-CD3 clustering on the cell surface and intracellular activation of LCK that phosphorylates the ITAM motifs of CD3G, CD3D, CD3E and CD247 enabling the recruitment of ZAP70. In turn ZAP70 phosphorylates LAT, which recruits numerous signaling molecules to form the LAT signalosome. The LAT signalosome propagates signal branching to three major signaling pathways, the calcium, the mitogen-activated protein kinase (MAPK) kinase and the nuclear factor NF-kappa-B (NF-kB) pathways, leading to the mobilization of transcription factors that are critical for gene expression and essential for T cell growth and differentiation (PubMed:23524462). The T cell repertoire is generated in the thymus, by V-(D)-J rearrangement. This repertoire is then shaped by intrathymic selection events to generate a peripheral T cell pool of self-MH restricted, non-autoaggressive T cells. Post-thymic interaction of alpha-beta TR with the pMH complexes shapes TR structural and functional avidity (PubMed:15040585).</text>
</comment>
<comment type="subunit">
    <text evidence="4">Alpha-beta TR is a heterodimer composed of an alpha and beta chain; disulfide-linked. The alpha-beta TR is associated with the transmembrane signaling CD3 coreceptor proteins to form the TR-CD3 (TcR or TCR). The assembly of alpha-beta TR heterodimers with CD3 occurs in the endoplasmic reticulum where a single alpha-beta TR heterodimer associates with one CD3D-CD3E heterodimer, one CD3G-CD3E heterodimer and one CD247 homodimer forming a stable octameric structure. CD3D-CD3E and CD3G-CD3E heterodimers preferentially associate with TR alpha and TR beta chains, respectively. The association of the CD247 homodimer is the last step of TcR assembly in the endoplasmic reticulum and is required for transport to the cell surface.</text>
</comment>
<comment type="subcellular location">
    <subcellularLocation>
        <location evidence="4">Cell membrane</location>
    </subcellularLocation>
</comment>
<comment type="polymorphism">
    <text evidence="9">There are several alleles. The sequence shown is that of IMGT allele TRBV6-6*02.</text>
</comment>
<keyword id="KW-1064">Adaptive immunity</keyword>
<keyword id="KW-1003">Cell membrane</keyword>
<keyword id="KW-1015">Disulfide bond</keyword>
<keyword id="KW-0325">Glycoprotein</keyword>
<keyword id="KW-0391">Immunity</keyword>
<keyword id="KW-0393">Immunoglobulin domain</keyword>
<keyword id="KW-0472">Membrane</keyword>
<keyword id="KW-0675">Receptor</keyword>
<keyword id="KW-1185">Reference proteome</keyword>
<keyword id="KW-0732">Signal</keyword>
<keyword id="KW-1279">T cell receptor</keyword>